<sequence>MSQPCPCGSADEYSLCCGRIVSGERVAPDPSHLMRSRYCAFVMKDADYLIKSWHPTCNAAAFRDDIIAGFANTRWLGLTIFEHTWSEAENTGYVSFIARFSEQGKTGAIIERSRFIKENGQWYYIDGTRPQLGRNDPCPCGSGKKFKKCCGQ</sequence>
<protein>
    <recommendedName>
        <fullName evidence="1">UPF0225 protein YchJ</fullName>
    </recommendedName>
</protein>
<name>YCHJ_SALG2</name>
<accession>B5R6J8</accession>
<gene>
    <name evidence="1" type="primary">ychJ</name>
    <name type="ordered locus">SG1361</name>
</gene>
<proteinExistence type="inferred from homology"/>
<reference key="1">
    <citation type="journal article" date="2008" name="Genome Res.">
        <title>Comparative genome analysis of Salmonella enteritidis PT4 and Salmonella gallinarum 287/91 provides insights into evolutionary and host adaptation pathways.</title>
        <authorList>
            <person name="Thomson N.R."/>
            <person name="Clayton D.J."/>
            <person name="Windhorst D."/>
            <person name="Vernikos G."/>
            <person name="Davidson S."/>
            <person name="Churcher C."/>
            <person name="Quail M.A."/>
            <person name="Stevens M."/>
            <person name="Jones M.A."/>
            <person name="Watson M."/>
            <person name="Barron A."/>
            <person name="Layton A."/>
            <person name="Pickard D."/>
            <person name="Kingsley R.A."/>
            <person name="Bignell A."/>
            <person name="Clark L."/>
            <person name="Harris B."/>
            <person name="Ormond D."/>
            <person name="Abdellah Z."/>
            <person name="Brooks K."/>
            <person name="Cherevach I."/>
            <person name="Chillingworth T."/>
            <person name="Woodward J."/>
            <person name="Norberczak H."/>
            <person name="Lord A."/>
            <person name="Arrowsmith C."/>
            <person name="Jagels K."/>
            <person name="Moule S."/>
            <person name="Mungall K."/>
            <person name="Saunders M."/>
            <person name="Whitehead S."/>
            <person name="Chabalgoity J.A."/>
            <person name="Maskell D."/>
            <person name="Humphreys T."/>
            <person name="Roberts M."/>
            <person name="Barrow P.A."/>
            <person name="Dougan G."/>
            <person name="Parkhill J."/>
        </authorList>
    </citation>
    <scope>NUCLEOTIDE SEQUENCE [LARGE SCALE GENOMIC DNA]</scope>
    <source>
        <strain>287/91 / NCTC 13346</strain>
    </source>
</reference>
<feature type="chain" id="PRO_1000130393" description="UPF0225 protein YchJ">
    <location>
        <begin position="1"/>
        <end position="152"/>
    </location>
</feature>
<organism>
    <name type="scientific">Salmonella gallinarum (strain 287/91 / NCTC 13346)</name>
    <dbReference type="NCBI Taxonomy" id="550538"/>
    <lineage>
        <taxon>Bacteria</taxon>
        <taxon>Pseudomonadati</taxon>
        <taxon>Pseudomonadota</taxon>
        <taxon>Gammaproteobacteria</taxon>
        <taxon>Enterobacterales</taxon>
        <taxon>Enterobacteriaceae</taxon>
        <taxon>Salmonella</taxon>
    </lineage>
</organism>
<comment type="similarity">
    <text evidence="1">Belongs to the UPF0225 family.</text>
</comment>
<evidence type="ECO:0000255" key="1">
    <source>
        <dbReference type="HAMAP-Rule" id="MF_00612"/>
    </source>
</evidence>
<dbReference type="EMBL" id="AM933173">
    <property type="protein sequence ID" value="CAR37235.1"/>
    <property type="molecule type" value="Genomic_DNA"/>
</dbReference>
<dbReference type="RefSeq" id="WP_001540172.1">
    <property type="nucleotide sequence ID" value="NC_011274.1"/>
</dbReference>
<dbReference type="SMR" id="B5R6J8"/>
<dbReference type="KEGG" id="seg:SG1361"/>
<dbReference type="HOGENOM" id="CLU_099590_0_0_6"/>
<dbReference type="Proteomes" id="UP000008321">
    <property type="component" value="Chromosome"/>
</dbReference>
<dbReference type="Gene3D" id="3.10.450.50">
    <property type="match status" value="1"/>
</dbReference>
<dbReference type="HAMAP" id="MF_00612">
    <property type="entry name" value="UPF0225"/>
    <property type="match status" value="1"/>
</dbReference>
<dbReference type="InterPro" id="IPR032710">
    <property type="entry name" value="NTF2-like_dom_sf"/>
</dbReference>
<dbReference type="InterPro" id="IPR004027">
    <property type="entry name" value="SEC_C_motif"/>
</dbReference>
<dbReference type="InterPro" id="IPR023006">
    <property type="entry name" value="UPF0225"/>
</dbReference>
<dbReference type="InterPro" id="IPR048469">
    <property type="entry name" value="YchJ-like_M"/>
</dbReference>
<dbReference type="NCBIfam" id="NF002449">
    <property type="entry name" value="PRK01617.1"/>
    <property type="match status" value="1"/>
</dbReference>
<dbReference type="NCBIfam" id="NF002486">
    <property type="entry name" value="PRK01752.1"/>
    <property type="match status" value="1"/>
</dbReference>
<dbReference type="PANTHER" id="PTHR33747:SF1">
    <property type="entry name" value="ADENYLATE CYCLASE-ASSOCIATED CAP C-TERMINAL DOMAIN-CONTAINING PROTEIN"/>
    <property type="match status" value="1"/>
</dbReference>
<dbReference type="PANTHER" id="PTHR33747">
    <property type="entry name" value="UPF0225 PROTEIN SCO1677"/>
    <property type="match status" value="1"/>
</dbReference>
<dbReference type="Pfam" id="PF02810">
    <property type="entry name" value="SEC-C"/>
    <property type="match status" value="2"/>
</dbReference>
<dbReference type="Pfam" id="PF17775">
    <property type="entry name" value="YchJ_M-like"/>
    <property type="match status" value="1"/>
</dbReference>
<dbReference type="SUPFAM" id="SSF54427">
    <property type="entry name" value="NTF2-like"/>
    <property type="match status" value="1"/>
</dbReference>
<dbReference type="SUPFAM" id="SSF103642">
    <property type="entry name" value="Sec-C motif"/>
    <property type="match status" value="1"/>
</dbReference>